<organism>
    <name type="scientific">Schizosaccharomyces pombe (strain 972 / ATCC 24843)</name>
    <name type="common">Fission yeast</name>
    <dbReference type="NCBI Taxonomy" id="284812"/>
    <lineage>
        <taxon>Eukaryota</taxon>
        <taxon>Fungi</taxon>
        <taxon>Dikarya</taxon>
        <taxon>Ascomycota</taxon>
        <taxon>Taphrinomycotina</taxon>
        <taxon>Schizosaccharomycetes</taxon>
        <taxon>Schizosaccharomycetales</taxon>
        <taxon>Schizosaccharomycetaceae</taxon>
        <taxon>Schizosaccharomyces</taxon>
    </lineage>
</organism>
<dbReference type="EMBL" id="CU329671">
    <property type="protein sequence ID" value="CAB88231.1"/>
    <property type="molecule type" value="Genomic_DNA"/>
</dbReference>
<dbReference type="PIR" id="S00571">
    <property type="entry name" value="S00571"/>
</dbReference>
<dbReference type="RefSeq" id="NP_001018808.1">
    <property type="nucleotide sequence ID" value="NM_001021772.1"/>
</dbReference>
<dbReference type="RefSeq" id="NP_595874.1">
    <property type="nucleotide sequence ID" value="NM_001021780.1"/>
</dbReference>
<dbReference type="SMR" id="P0CY14"/>
<dbReference type="BioGRID" id="280337">
    <property type="interactions" value="1"/>
</dbReference>
<dbReference type="STRING" id="284812.P0CY14"/>
<dbReference type="EnsemblFungi" id="SPBC1711.01c.1">
    <property type="protein sequence ID" value="SPBC1711.01c.1:pep"/>
    <property type="gene ID" value="SPBC1711.01c"/>
</dbReference>
<dbReference type="EnsemblFungi" id="SPBC23G7.17c.1">
    <property type="protein sequence ID" value="SPBC23G7.17c.1:pep"/>
    <property type="gene ID" value="SPBC23G7.17c"/>
</dbReference>
<dbReference type="EnsemblFungi" id="SPMTR.03.1">
    <property type="protein sequence ID" value="SPMTR.03.1:pep"/>
    <property type="gene ID" value="SPMTR.03"/>
</dbReference>
<dbReference type="GeneID" id="2539637"/>
<dbReference type="GeneID" id="3361261"/>
<dbReference type="KEGG" id="spo:2539637"/>
<dbReference type="KEGG" id="spo:3361261"/>
<dbReference type="PomBase" id="SPBC1711.01c">
    <property type="gene designation" value="mat3-Mm"/>
</dbReference>
<dbReference type="VEuPathDB" id="FungiDB:SPBC1711.01c"/>
<dbReference type="VEuPathDB" id="FungiDB:SPBC23G7.17c"/>
<dbReference type="VEuPathDB" id="FungiDB:SPMTR.03"/>
<dbReference type="HOGENOM" id="CLU_3260800_0_0_1"/>
<dbReference type="InParanoid" id="P0CY14"/>
<dbReference type="PRO" id="PR:P0CY14"/>
<dbReference type="Proteomes" id="UP000002485">
    <property type="component" value="Chromosome II"/>
</dbReference>
<reference key="1">
    <citation type="journal article" date="2002" name="Nature">
        <title>The genome sequence of Schizosaccharomyces pombe.</title>
        <authorList>
            <person name="Wood V."/>
            <person name="Gwilliam R."/>
            <person name="Rajandream M.A."/>
            <person name="Lyne M.H."/>
            <person name="Lyne R."/>
            <person name="Stewart A."/>
            <person name="Sgouros J.G."/>
            <person name="Peat N."/>
            <person name="Hayles J."/>
            <person name="Baker S.G."/>
            <person name="Basham D."/>
            <person name="Bowman S."/>
            <person name="Brooks K."/>
            <person name="Brown D."/>
            <person name="Brown S."/>
            <person name="Chillingworth T."/>
            <person name="Churcher C.M."/>
            <person name="Collins M."/>
            <person name="Connor R."/>
            <person name="Cronin A."/>
            <person name="Davis P."/>
            <person name="Feltwell T."/>
            <person name="Fraser A."/>
            <person name="Gentles S."/>
            <person name="Goble A."/>
            <person name="Hamlin N."/>
            <person name="Harris D.E."/>
            <person name="Hidalgo J."/>
            <person name="Hodgson G."/>
            <person name="Holroyd S."/>
            <person name="Hornsby T."/>
            <person name="Howarth S."/>
            <person name="Huckle E.J."/>
            <person name="Hunt S."/>
            <person name="Jagels K."/>
            <person name="James K.D."/>
            <person name="Jones L."/>
            <person name="Jones M."/>
            <person name="Leather S."/>
            <person name="McDonald S."/>
            <person name="McLean J."/>
            <person name="Mooney P."/>
            <person name="Moule S."/>
            <person name="Mungall K.L."/>
            <person name="Murphy L.D."/>
            <person name="Niblett D."/>
            <person name="Odell C."/>
            <person name="Oliver K."/>
            <person name="O'Neil S."/>
            <person name="Pearson D."/>
            <person name="Quail M.A."/>
            <person name="Rabbinowitsch E."/>
            <person name="Rutherford K.M."/>
            <person name="Rutter S."/>
            <person name="Saunders D."/>
            <person name="Seeger K."/>
            <person name="Sharp S."/>
            <person name="Skelton J."/>
            <person name="Simmonds M.N."/>
            <person name="Squares R."/>
            <person name="Squares S."/>
            <person name="Stevens K."/>
            <person name="Taylor K."/>
            <person name="Taylor R.G."/>
            <person name="Tivey A."/>
            <person name="Walsh S.V."/>
            <person name="Warren T."/>
            <person name="Whitehead S."/>
            <person name="Woodward J.R."/>
            <person name="Volckaert G."/>
            <person name="Aert R."/>
            <person name="Robben J."/>
            <person name="Grymonprez B."/>
            <person name="Weltjens I."/>
            <person name="Vanstreels E."/>
            <person name="Rieger M."/>
            <person name="Schaefer M."/>
            <person name="Mueller-Auer S."/>
            <person name="Gabel C."/>
            <person name="Fuchs M."/>
            <person name="Duesterhoeft A."/>
            <person name="Fritzc C."/>
            <person name="Holzer E."/>
            <person name="Moestl D."/>
            <person name="Hilbert H."/>
            <person name="Borzym K."/>
            <person name="Langer I."/>
            <person name="Beck A."/>
            <person name="Lehrach H."/>
            <person name="Reinhardt R."/>
            <person name="Pohl T.M."/>
            <person name="Eger P."/>
            <person name="Zimmermann W."/>
            <person name="Wedler H."/>
            <person name="Wambutt R."/>
            <person name="Purnelle B."/>
            <person name="Goffeau A."/>
            <person name="Cadieu E."/>
            <person name="Dreano S."/>
            <person name="Gloux S."/>
            <person name="Lelaure V."/>
            <person name="Mottier S."/>
            <person name="Galibert F."/>
            <person name="Aves S.J."/>
            <person name="Xiang Z."/>
            <person name="Hunt C."/>
            <person name="Moore K."/>
            <person name="Hurst S.M."/>
            <person name="Lucas M."/>
            <person name="Rochet M."/>
            <person name="Gaillardin C."/>
            <person name="Tallada V.A."/>
            <person name="Garzon A."/>
            <person name="Thode G."/>
            <person name="Daga R.R."/>
            <person name="Cruzado L."/>
            <person name="Jimenez J."/>
            <person name="Sanchez M."/>
            <person name="del Rey F."/>
            <person name="Benito J."/>
            <person name="Dominguez A."/>
            <person name="Revuelta J.L."/>
            <person name="Moreno S."/>
            <person name="Armstrong J."/>
            <person name="Forsburg S.L."/>
            <person name="Cerutti L."/>
            <person name="Lowe T."/>
            <person name="McCombie W.R."/>
            <person name="Paulsen I."/>
            <person name="Potashkin J."/>
            <person name="Shpakovski G.V."/>
            <person name="Ussery D."/>
            <person name="Barrell B.G."/>
            <person name="Nurse P."/>
        </authorList>
    </citation>
    <scope>NUCLEOTIDE SEQUENCE [LARGE SCALE GENOMIC DNA]</scope>
    <source>
        <strain>972 / ATCC 24843</strain>
    </source>
</reference>
<keyword id="KW-1185">Reference proteome</keyword>
<name>MTMI3_SCHPO</name>
<proteinExistence type="predicted"/>
<gene>
    <name type="primary">mat3-Mm</name>
    <name type="synonym">mat3-Mi</name>
    <name type="synonym">matMi</name>
    <name type="ORF">SPBC1711.01c</name>
</gene>
<sequence>MSAEDLFTIQILCDQIELKLASIVINSNIKLQLKRKKKTQQL</sequence>
<feature type="chain" id="PRO_0000096247" description="Silenced mating-type M-specific polypeptide Mi">
    <location>
        <begin position="1"/>
        <end position="42"/>
    </location>
</feature>
<comment type="function">
    <text>Mating type proteins are sequence specific DNA-binding proteins that act as master switches in yeast differentiation by controlling gene expression in a cell type-specific fashion. Silenced copy of mat-Mi at mat3-M.</text>
</comment>
<comment type="miscellaneous">
    <text>There are three genetic loci for mating type genes in S.pombe, mat1, mat2-P and mat3-M. Cell type is determined by the alternate allele present in mat1, either P (plus) in a h+ or M (minus) in a h- cell. Mat2-P and mat3-M serve as donor of information that is transposed to mat1 during a switch of mating type.</text>
</comment>
<accession>P0CY14</accession>
<accession>P10839</accession>
<protein>
    <recommendedName>
        <fullName>Silenced mating-type M-specific polypeptide Mi</fullName>
    </recommendedName>
</protein>